<organism>
    <name type="scientific">Salmonella typhimurium (strain LT2 / SGSC1412 / ATCC 700720)</name>
    <dbReference type="NCBI Taxonomy" id="99287"/>
    <lineage>
        <taxon>Bacteria</taxon>
        <taxon>Pseudomonadati</taxon>
        <taxon>Pseudomonadota</taxon>
        <taxon>Gammaproteobacteria</taxon>
        <taxon>Enterobacterales</taxon>
        <taxon>Enterobacteriaceae</taxon>
        <taxon>Salmonella</taxon>
    </lineage>
</organism>
<comment type="function">
    <text evidence="1">Probably functions as a manganese efflux pump.</text>
</comment>
<comment type="subcellular location">
    <subcellularLocation>
        <location evidence="1">Cell inner membrane</location>
        <topology evidence="1">Multi-pass membrane protein</topology>
    </subcellularLocation>
</comment>
<comment type="similarity">
    <text evidence="1">Belongs to the MntP (TC 9.B.29) family.</text>
</comment>
<comment type="sequence caution" evidence="2">
    <conflict type="erroneous initiation">
        <sequence resource="EMBL-CDS" id="AAL20749"/>
    </conflict>
</comment>
<keyword id="KW-0997">Cell inner membrane</keyword>
<keyword id="KW-1003">Cell membrane</keyword>
<keyword id="KW-0406">Ion transport</keyword>
<keyword id="KW-0464">Manganese</keyword>
<keyword id="KW-0472">Membrane</keyword>
<keyword id="KW-1185">Reference proteome</keyword>
<keyword id="KW-0812">Transmembrane</keyword>
<keyword id="KW-1133">Transmembrane helix</keyword>
<keyword id="KW-0813">Transport</keyword>
<feature type="chain" id="PRO_0000155666" description="Probable manganese efflux pump MntP">
    <location>
        <begin position="1"/>
        <end position="188"/>
    </location>
</feature>
<feature type="transmembrane region" description="Helical" evidence="1">
    <location>
        <begin position="3"/>
        <end position="23"/>
    </location>
</feature>
<feature type="transmembrane region" description="Helical" evidence="1">
    <location>
        <begin position="41"/>
        <end position="61"/>
    </location>
</feature>
<feature type="transmembrane region" description="Helical" evidence="1">
    <location>
        <begin position="66"/>
        <end position="86"/>
    </location>
</feature>
<feature type="transmembrane region" description="Helical" evidence="1">
    <location>
        <begin position="106"/>
        <end position="128"/>
    </location>
</feature>
<feature type="transmembrane region" description="Helical" evidence="1">
    <location>
        <begin position="143"/>
        <end position="163"/>
    </location>
</feature>
<feature type="transmembrane region" description="Helical" evidence="1">
    <location>
        <begin position="168"/>
        <end position="188"/>
    </location>
</feature>
<reference key="1">
    <citation type="journal article" date="2001" name="Nature">
        <title>Complete genome sequence of Salmonella enterica serovar Typhimurium LT2.</title>
        <authorList>
            <person name="McClelland M."/>
            <person name="Sanderson K.E."/>
            <person name="Spieth J."/>
            <person name="Clifton S.W."/>
            <person name="Latreille P."/>
            <person name="Courtney L."/>
            <person name="Porwollik S."/>
            <person name="Ali J."/>
            <person name="Dante M."/>
            <person name="Du F."/>
            <person name="Hou S."/>
            <person name="Layman D."/>
            <person name="Leonard S."/>
            <person name="Nguyen C."/>
            <person name="Scott K."/>
            <person name="Holmes A."/>
            <person name="Grewal N."/>
            <person name="Mulvaney E."/>
            <person name="Ryan E."/>
            <person name="Sun H."/>
            <person name="Florea L."/>
            <person name="Miller W."/>
            <person name="Stoneking T."/>
            <person name="Nhan M."/>
            <person name="Waterston R."/>
            <person name="Wilson R.K."/>
        </authorList>
    </citation>
    <scope>NUCLEOTIDE SEQUENCE [LARGE SCALE GENOMIC DNA]</scope>
    <source>
        <strain>LT2 / SGSC1412 / ATCC 700720</strain>
    </source>
</reference>
<protein>
    <recommendedName>
        <fullName evidence="1">Probable manganese efflux pump MntP</fullName>
    </recommendedName>
</protein>
<name>MNTP_SALTY</name>
<proteinExistence type="inferred from homology"/>
<dbReference type="EMBL" id="AE006468">
    <property type="protein sequence ID" value="AAL20749.1"/>
    <property type="status" value="ALT_INIT"/>
    <property type="molecule type" value="Genomic_DNA"/>
</dbReference>
<dbReference type="RefSeq" id="NP_460790.1">
    <property type="nucleotide sequence ID" value="NC_003197.2"/>
</dbReference>
<dbReference type="STRING" id="99287.STM1834"/>
<dbReference type="PaxDb" id="99287-STM1834"/>
<dbReference type="GeneID" id="1253353"/>
<dbReference type="KEGG" id="stm:STM1834"/>
<dbReference type="PATRIC" id="fig|99287.12.peg.1935"/>
<dbReference type="HOGENOM" id="CLU_096410_0_0_6"/>
<dbReference type="PhylomeDB" id="Q8ZP00"/>
<dbReference type="Proteomes" id="UP000001014">
    <property type="component" value="Chromosome"/>
</dbReference>
<dbReference type="GO" id="GO:0005886">
    <property type="term" value="C:plasma membrane"/>
    <property type="evidence" value="ECO:0000318"/>
    <property type="project" value="GO_Central"/>
</dbReference>
<dbReference type="GO" id="GO:0005384">
    <property type="term" value="F:manganese ion transmembrane transporter activity"/>
    <property type="evidence" value="ECO:0000318"/>
    <property type="project" value="GO_Central"/>
</dbReference>
<dbReference type="GO" id="GO:0030026">
    <property type="term" value="P:intracellular manganese ion homeostasis"/>
    <property type="evidence" value="ECO:0000318"/>
    <property type="project" value="GO_Central"/>
</dbReference>
<dbReference type="GO" id="GO:0140048">
    <property type="term" value="P:manganese ion export across plasma membrane"/>
    <property type="evidence" value="ECO:0000318"/>
    <property type="project" value="GO_Central"/>
</dbReference>
<dbReference type="HAMAP" id="MF_01521">
    <property type="entry name" value="MntP_pump"/>
    <property type="match status" value="1"/>
</dbReference>
<dbReference type="InterPro" id="IPR003810">
    <property type="entry name" value="Mntp/YtaF"/>
</dbReference>
<dbReference type="InterPro" id="IPR022929">
    <property type="entry name" value="Put_MntP"/>
</dbReference>
<dbReference type="NCBIfam" id="NF008546">
    <property type="entry name" value="PRK11469.1"/>
    <property type="match status" value="1"/>
</dbReference>
<dbReference type="PANTHER" id="PTHR35529">
    <property type="entry name" value="MANGANESE EFFLUX PUMP MNTP-RELATED"/>
    <property type="match status" value="1"/>
</dbReference>
<dbReference type="PANTHER" id="PTHR35529:SF1">
    <property type="entry name" value="MANGANESE EFFLUX PUMP MNTP-RELATED"/>
    <property type="match status" value="1"/>
</dbReference>
<dbReference type="Pfam" id="PF02659">
    <property type="entry name" value="Mntp"/>
    <property type="match status" value="1"/>
</dbReference>
<evidence type="ECO:0000255" key="1">
    <source>
        <dbReference type="HAMAP-Rule" id="MF_01521"/>
    </source>
</evidence>
<evidence type="ECO:0000305" key="2"/>
<gene>
    <name evidence="1" type="primary">mntP</name>
    <name type="synonym">yebN</name>
    <name type="ordered locus">STM1834</name>
</gene>
<accession>Q8ZP00</accession>
<sequence length="188" mass="20049">MHFTATVLLAFGMSMDAFAASIGKGATLHKPKFSEALRTGLIFGAVETLTPLIGWGLGILASKFVLEWNHWIAFVLLIFLGGRMIIEGIRGGSDEDETPLRRHSFWLLVTTAIATSLDAMAVGVGLAFLQVNIIATALAIGCATLIMSTLGMMIGRFIGPMLGKRAEILGGVVLIGIGVQILWTHFHG</sequence>